<reference key="1">
    <citation type="journal article" date="1998" name="FEBS Lett.">
        <title>Cloning of a shrimp (Metapanaeus ensis) cDNA encoding a nuclear receptor superfamily member: an insect homologue of E75 gene.</title>
        <authorList>
            <person name="Chan S.-M."/>
        </authorList>
    </citation>
    <scope>NUCLEOTIDE SEQUENCE [MRNA]</scope>
    <source>
        <tissue>Pleopod</tissue>
    </source>
</reference>
<keyword id="KW-0238">DNA-binding</keyword>
<keyword id="KW-0479">Metal-binding</keyword>
<keyword id="KW-0539">Nucleus</keyword>
<keyword id="KW-0675">Receptor</keyword>
<keyword id="KW-0804">Transcription</keyword>
<keyword id="KW-0805">Transcription regulation</keyword>
<keyword id="KW-0862">Zinc</keyword>
<keyword id="KW-0863">Zinc-finger</keyword>
<name>E75_METEN</name>
<dbReference type="EMBL" id="AF092946">
    <property type="protein sequence ID" value="AAC71770.1"/>
    <property type="molecule type" value="mRNA"/>
</dbReference>
<dbReference type="SMR" id="O77245"/>
<dbReference type="GO" id="GO:0005634">
    <property type="term" value="C:nucleus"/>
    <property type="evidence" value="ECO:0007669"/>
    <property type="project" value="UniProtKB-SubCell"/>
</dbReference>
<dbReference type="GO" id="GO:0004879">
    <property type="term" value="F:nuclear receptor activity"/>
    <property type="evidence" value="ECO:0007669"/>
    <property type="project" value="TreeGrafter"/>
</dbReference>
<dbReference type="GO" id="GO:0000978">
    <property type="term" value="F:RNA polymerase II cis-regulatory region sequence-specific DNA binding"/>
    <property type="evidence" value="ECO:0007669"/>
    <property type="project" value="TreeGrafter"/>
</dbReference>
<dbReference type="GO" id="GO:0008270">
    <property type="term" value="F:zinc ion binding"/>
    <property type="evidence" value="ECO:0007669"/>
    <property type="project" value="UniProtKB-KW"/>
</dbReference>
<dbReference type="GO" id="GO:0030154">
    <property type="term" value="P:cell differentiation"/>
    <property type="evidence" value="ECO:0007669"/>
    <property type="project" value="TreeGrafter"/>
</dbReference>
<dbReference type="GO" id="GO:0009755">
    <property type="term" value="P:hormone-mediated signaling pathway"/>
    <property type="evidence" value="ECO:0007669"/>
    <property type="project" value="TreeGrafter"/>
</dbReference>
<dbReference type="GO" id="GO:0000122">
    <property type="term" value="P:negative regulation of transcription by RNA polymerase II"/>
    <property type="evidence" value="ECO:0007669"/>
    <property type="project" value="TreeGrafter"/>
</dbReference>
<dbReference type="GO" id="GO:0045944">
    <property type="term" value="P:positive regulation of transcription by RNA polymerase II"/>
    <property type="evidence" value="ECO:0007669"/>
    <property type="project" value="TreeGrafter"/>
</dbReference>
<dbReference type="CDD" id="cd07166">
    <property type="entry name" value="NR_DBD_REV_ERB"/>
    <property type="match status" value="1"/>
</dbReference>
<dbReference type="FunFam" id="1.10.565.10:FF:000029">
    <property type="entry name" value="Ecdysone-induced protein 75B, isoform B"/>
    <property type="match status" value="1"/>
</dbReference>
<dbReference type="FunFam" id="3.30.50.10:FF:000013">
    <property type="entry name" value="Nuclear receptor subfamily 1 group D member 2"/>
    <property type="match status" value="1"/>
</dbReference>
<dbReference type="Gene3D" id="3.30.50.10">
    <property type="entry name" value="Erythroid Transcription Factor GATA-1, subunit A"/>
    <property type="match status" value="1"/>
</dbReference>
<dbReference type="Gene3D" id="1.10.565.10">
    <property type="entry name" value="Retinoid X Receptor"/>
    <property type="match status" value="1"/>
</dbReference>
<dbReference type="InterPro" id="IPR035500">
    <property type="entry name" value="NHR-like_dom_sf"/>
</dbReference>
<dbReference type="InterPro" id="IPR000536">
    <property type="entry name" value="Nucl_hrmn_rcpt_lig-bd"/>
</dbReference>
<dbReference type="InterPro" id="IPR050234">
    <property type="entry name" value="Nuclear_hormone_rcpt_NR1"/>
</dbReference>
<dbReference type="InterPro" id="IPR001723">
    <property type="entry name" value="Nuclear_hrmn_rcpt"/>
</dbReference>
<dbReference type="InterPro" id="IPR001628">
    <property type="entry name" value="Znf_hrmn_rcpt"/>
</dbReference>
<dbReference type="InterPro" id="IPR013088">
    <property type="entry name" value="Znf_NHR/GATA"/>
</dbReference>
<dbReference type="PANTHER" id="PTHR24082:SF473">
    <property type="entry name" value="ECDYSONE-INDUCED PROTEIN 75B, ISOFORM B"/>
    <property type="match status" value="1"/>
</dbReference>
<dbReference type="PANTHER" id="PTHR24082">
    <property type="entry name" value="NUCLEAR HORMONE RECEPTOR"/>
    <property type="match status" value="1"/>
</dbReference>
<dbReference type="Pfam" id="PF00104">
    <property type="entry name" value="Hormone_recep"/>
    <property type="match status" value="1"/>
</dbReference>
<dbReference type="Pfam" id="PF00105">
    <property type="entry name" value="zf-C4"/>
    <property type="match status" value="1"/>
</dbReference>
<dbReference type="PRINTS" id="PR00398">
    <property type="entry name" value="STRDHORMONER"/>
</dbReference>
<dbReference type="PRINTS" id="PR00047">
    <property type="entry name" value="STROIDFINGER"/>
</dbReference>
<dbReference type="SMART" id="SM00430">
    <property type="entry name" value="HOLI"/>
    <property type="match status" value="1"/>
</dbReference>
<dbReference type="SMART" id="SM00399">
    <property type="entry name" value="ZnF_C4"/>
    <property type="match status" value="1"/>
</dbReference>
<dbReference type="SUPFAM" id="SSF57716">
    <property type="entry name" value="Glucocorticoid receptor-like (DNA-binding domain)"/>
    <property type="match status" value="1"/>
</dbReference>
<dbReference type="SUPFAM" id="SSF48508">
    <property type="entry name" value="Nuclear receptor ligand-binding domain"/>
    <property type="match status" value="1"/>
</dbReference>
<dbReference type="PROSITE" id="PS51843">
    <property type="entry name" value="NR_LBD"/>
    <property type="match status" value="1"/>
</dbReference>
<dbReference type="PROSITE" id="PS00031">
    <property type="entry name" value="NUCLEAR_REC_DBD_1"/>
    <property type="match status" value="1"/>
</dbReference>
<dbReference type="PROSITE" id="PS51030">
    <property type="entry name" value="NUCLEAR_REC_DBD_2"/>
    <property type="match status" value="1"/>
</dbReference>
<protein>
    <recommendedName>
        <fullName>Nuclear hormone receptor E75</fullName>
    </recommendedName>
    <alternativeName>
        <fullName>Nuclear receptor subfamily 1 group D member 3</fullName>
    </alternativeName>
</protein>
<feature type="chain" id="PRO_0000053510" description="Nuclear hormone receptor E75">
    <location>
        <begin position="1"/>
        <end position="606"/>
    </location>
</feature>
<feature type="domain" description="NR LBD" evidence="2">
    <location>
        <begin position="138"/>
        <end position="392"/>
    </location>
</feature>
<feature type="DNA-binding region" description="Nuclear receptor" evidence="1">
    <location>
        <begin position="29"/>
        <end position="105"/>
    </location>
</feature>
<feature type="zinc finger region" description="NR C4-type" evidence="1">
    <location>
        <begin position="32"/>
        <end position="52"/>
    </location>
</feature>
<feature type="zinc finger region" description="NR C4-type" evidence="1">
    <location>
        <begin position="69"/>
        <end position="93"/>
    </location>
</feature>
<feature type="region of interest" description="Disordered" evidence="3">
    <location>
        <begin position="382"/>
        <end position="413"/>
    </location>
</feature>
<feature type="region of interest" description="Disordered" evidence="3">
    <location>
        <begin position="454"/>
        <end position="519"/>
    </location>
</feature>
<feature type="region of interest" description="Disordered" evidence="3">
    <location>
        <begin position="546"/>
        <end position="576"/>
    </location>
</feature>
<feature type="compositionally biased region" description="Low complexity" evidence="3">
    <location>
        <begin position="390"/>
        <end position="406"/>
    </location>
</feature>
<feature type="compositionally biased region" description="Low complexity" evidence="3">
    <location>
        <begin position="501"/>
        <end position="512"/>
    </location>
</feature>
<feature type="compositionally biased region" description="Polar residues" evidence="3">
    <location>
        <begin position="546"/>
        <end position="558"/>
    </location>
</feature>
<evidence type="ECO:0000255" key="1">
    <source>
        <dbReference type="PROSITE-ProRule" id="PRU00407"/>
    </source>
</evidence>
<evidence type="ECO:0000255" key="2">
    <source>
        <dbReference type="PROSITE-ProRule" id="PRU01189"/>
    </source>
</evidence>
<evidence type="ECO:0000256" key="3">
    <source>
        <dbReference type="SAM" id="MobiDB-lite"/>
    </source>
</evidence>
<evidence type="ECO:0000305" key="4"/>
<gene>
    <name type="primary">E75</name>
    <name type="synonym">NR1D3</name>
</gene>
<sequence>MFCDQDMYEIPADCQVLVDKTVIEFDGTTVLCRVCGDKASGFHYGVHSCEGCKGFFRRSIQQKIQYRPCTKNQQCSILRINRNRCQYCRLKKCIAVGMSRDAVRFGRVPKREKAKILAAMQSVNAKSQERAVLAELEDDTRVTAAIIRAHMDTCDFTRDKVAPMLQQARTHPSYTQCPPYLACPLNPRPVPLHGQQELVQDFSEALLPAIRGVVEFAKRLPGFQQLPQEDQVTLLKAGVFEVLLVRLAGMFDARTNAMLCLNGQLVRREALHTSVNARFLMDSMFDFAERVNSLALNDAELALFCAVVVLAPDRPGLRNAELVERVHRRLVNCLQAVVSKHHPENPNLQRDLLSKIPDLRTLNTLHSEKLLKYKMTEHTAAGAPWDDSRSSWSMEQESSVGSPSSSYTTDEAMRSPVSCSESICSGESASSGESLCGSEVSGYTELRPPFPLARRRHDHSEGASSGDEATESPLKCPFSKRKSDSPDDSGIESGTDRSDKLSSPSVCSSPRSSIDEKERGGPARTICRCCARLQRRPSSTRICSWRKPTTSPIKSSVRNVGKRSLTPHSPPPPRSWSRRCLSLHSTRALWLRHTPPWPPVWRRPLA</sequence>
<comment type="subcellular location">
    <subcellularLocation>
        <location evidence="1">Nucleus</location>
    </subcellularLocation>
</comment>
<comment type="tissue specificity">
    <text>Expressed in the epidermis, eyestalk and the nerve cord of the pre-molt shrimp.</text>
</comment>
<comment type="similarity">
    <text evidence="4">Belongs to the nuclear hormone receptor family. NR1 subfamily.</text>
</comment>
<accession>O77245</accession>
<organism>
    <name type="scientific">Metapenaeus ensis</name>
    <name type="common">Greasyback shrimp</name>
    <name type="synonym">Penaeus ensis</name>
    <dbReference type="NCBI Taxonomy" id="32278"/>
    <lineage>
        <taxon>Eukaryota</taxon>
        <taxon>Metazoa</taxon>
        <taxon>Ecdysozoa</taxon>
        <taxon>Arthropoda</taxon>
        <taxon>Crustacea</taxon>
        <taxon>Multicrustacea</taxon>
        <taxon>Malacostraca</taxon>
        <taxon>Eumalacostraca</taxon>
        <taxon>Eucarida</taxon>
        <taxon>Decapoda</taxon>
        <taxon>Dendrobranchiata</taxon>
        <taxon>Penaeoidea</taxon>
        <taxon>Penaeidae</taxon>
        <taxon>Metapenaeus</taxon>
    </lineage>
</organism>
<proteinExistence type="evidence at transcript level"/>